<gene>
    <name evidence="1" type="primary">tsaC</name>
    <name type="synonym">rimN</name>
    <name type="ordered locus">SARI_04225</name>
</gene>
<evidence type="ECO:0000255" key="1">
    <source>
        <dbReference type="HAMAP-Rule" id="MF_01852"/>
    </source>
</evidence>
<evidence type="ECO:0000305" key="2"/>
<protein>
    <recommendedName>
        <fullName evidence="1">Threonylcarbamoyl-AMP synthase</fullName>
        <shortName evidence="1">TC-AMP synthase</shortName>
        <ecNumber evidence="1">2.7.7.87</ecNumber>
    </recommendedName>
    <alternativeName>
        <fullName evidence="1">L-threonylcarbamoyladenylate synthase</fullName>
    </alternativeName>
    <alternativeName>
        <fullName evidence="1">t(6)A37 threonylcarbamoyladenosine biosynthesis protein TsaC</fullName>
    </alternativeName>
    <alternativeName>
        <fullName evidence="1">tRNA threonylcarbamoyladenosine biosynthesis protein TsaC</fullName>
    </alternativeName>
</protein>
<dbReference type="EC" id="2.7.7.87" evidence="1"/>
<dbReference type="EMBL" id="CP000880">
    <property type="protein sequence ID" value="ABX24014.1"/>
    <property type="status" value="ALT_INIT"/>
    <property type="molecule type" value="Genomic_DNA"/>
</dbReference>
<dbReference type="SMR" id="A9MN84"/>
<dbReference type="STRING" id="41514.SARI_04225"/>
<dbReference type="KEGG" id="ses:SARI_04225"/>
<dbReference type="HOGENOM" id="CLU_031397_6_0_6"/>
<dbReference type="Proteomes" id="UP000002084">
    <property type="component" value="Chromosome"/>
</dbReference>
<dbReference type="GO" id="GO:0005737">
    <property type="term" value="C:cytoplasm"/>
    <property type="evidence" value="ECO:0007669"/>
    <property type="project" value="UniProtKB-SubCell"/>
</dbReference>
<dbReference type="GO" id="GO:0005524">
    <property type="term" value="F:ATP binding"/>
    <property type="evidence" value="ECO:0007669"/>
    <property type="project" value="UniProtKB-UniRule"/>
</dbReference>
<dbReference type="GO" id="GO:0003725">
    <property type="term" value="F:double-stranded RNA binding"/>
    <property type="evidence" value="ECO:0007669"/>
    <property type="project" value="InterPro"/>
</dbReference>
<dbReference type="GO" id="GO:0061710">
    <property type="term" value="F:L-threonylcarbamoyladenylate synthase"/>
    <property type="evidence" value="ECO:0007669"/>
    <property type="project" value="UniProtKB-EC"/>
</dbReference>
<dbReference type="GO" id="GO:0000049">
    <property type="term" value="F:tRNA binding"/>
    <property type="evidence" value="ECO:0007669"/>
    <property type="project" value="TreeGrafter"/>
</dbReference>
<dbReference type="GO" id="GO:0006450">
    <property type="term" value="P:regulation of translational fidelity"/>
    <property type="evidence" value="ECO:0007669"/>
    <property type="project" value="TreeGrafter"/>
</dbReference>
<dbReference type="GO" id="GO:0002949">
    <property type="term" value="P:tRNA threonylcarbamoyladenosine modification"/>
    <property type="evidence" value="ECO:0007669"/>
    <property type="project" value="UniProtKB-UniRule"/>
</dbReference>
<dbReference type="FunFam" id="3.90.870.10:FF:000004">
    <property type="entry name" value="Threonylcarbamoyl-AMP synthase"/>
    <property type="match status" value="1"/>
</dbReference>
<dbReference type="Gene3D" id="3.90.870.10">
    <property type="entry name" value="DHBP synthase"/>
    <property type="match status" value="1"/>
</dbReference>
<dbReference type="HAMAP" id="MF_01852">
    <property type="entry name" value="TsaC"/>
    <property type="match status" value="1"/>
</dbReference>
<dbReference type="InterPro" id="IPR017945">
    <property type="entry name" value="DHBP_synth_RibB-like_a/b_dom"/>
</dbReference>
<dbReference type="InterPro" id="IPR006070">
    <property type="entry name" value="Sua5-like_dom"/>
</dbReference>
<dbReference type="InterPro" id="IPR023535">
    <property type="entry name" value="TC-AMP_synthase"/>
</dbReference>
<dbReference type="InterPro" id="IPR050156">
    <property type="entry name" value="TC-AMP_synthase_SUA5"/>
</dbReference>
<dbReference type="NCBIfam" id="NF007919">
    <property type="entry name" value="PRK10634.1"/>
    <property type="match status" value="1"/>
</dbReference>
<dbReference type="PANTHER" id="PTHR17490">
    <property type="entry name" value="SUA5"/>
    <property type="match status" value="1"/>
</dbReference>
<dbReference type="PANTHER" id="PTHR17490:SF18">
    <property type="entry name" value="THREONYLCARBAMOYL-AMP SYNTHASE"/>
    <property type="match status" value="1"/>
</dbReference>
<dbReference type="Pfam" id="PF01300">
    <property type="entry name" value="Sua5_yciO_yrdC"/>
    <property type="match status" value="1"/>
</dbReference>
<dbReference type="SUPFAM" id="SSF55821">
    <property type="entry name" value="YrdC/RibB"/>
    <property type="match status" value="1"/>
</dbReference>
<dbReference type="PROSITE" id="PS51163">
    <property type="entry name" value="YRDC"/>
    <property type="match status" value="1"/>
</dbReference>
<accession>A9MN84</accession>
<feature type="chain" id="PRO_0000352967" description="Threonylcarbamoyl-AMP synthase">
    <location>
        <begin position="1"/>
        <end position="190"/>
    </location>
</feature>
<feature type="domain" description="YrdC-like" evidence="1">
    <location>
        <begin position="7"/>
        <end position="190"/>
    </location>
</feature>
<sequence length="190" mass="20463">MNNNLPTGSIAAAVDLLNKENVIAYPTEAVFGVGCDPDSETAVTRLLELKQRPVDKGLILIAASFEQLKPYIDDSILTTAQRKAVFDCWPGPVTFVFPASATTPRWLTGRFDSLAVRVTDHPLVVALCNAYGKPLVSTSANLSGLPPCRTVEEVRAQFGDDFPMVEGATGGRLNPSEIRDALTGELFRQG</sequence>
<reference key="1">
    <citation type="submission" date="2007-11" db="EMBL/GenBank/DDBJ databases">
        <authorList>
            <consortium name="The Salmonella enterica serovar Arizonae Genome Sequencing Project"/>
            <person name="McClelland M."/>
            <person name="Sanderson E.K."/>
            <person name="Porwollik S."/>
            <person name="Spieth J."/>
            <person name="Clifton W.S."/>
            <person name="Fulton R."/>
            <person name="Chunyan W."/>
            <person name="Wollam A."/>
            <person name="Shah N."/>
            <person name="Pepin K."/>
            <person name="Bhonagiri V."/>
            <person name="Nash W."/>
            <person name="Johnson M."/>
            <person name="Thiruvilangam P."/>
            <person name="Wilson R."/>
        </authorList>
    </citation>
    <scope>NUCLEOTIDE SEQUENCE [LARGE SCALE GENOMIC DNA]</scope>
    <source>
        <strain>ATCC BAA-731 / CDC346-86 / RSK2980</strain>
    </source>
</reference>
<name>TSAC_SALAR</name>
<proteinExistence type="inferred from homology"/>
<comment type="function">
    <text evidence="1">Required for the formation of a threonylcarbamoyl group on adenosine at position 37 (t(6)A37) in tRNAs that read codons beginning with adenine. Catalyzes the conversion of L-threonine, HCO(3)(-)/CO(2) and ATP to give threonylcarbamoyl-AMP (TC-AMP) as the acyladenylate intermediate, with the release of diphosphate.</text>
</comment>
<comment type="catalytic activity">
    <reaction evidence="1">
        <text>L-threonine + hydrogencarbonate + ATP = L-threonylcarbamoyladenylate + diphosphate + H2O</text>
        <dbReference type="Rhea" id="RHEA:36407"/>
        <dbReference type="ChEBI" id="CHEBI:15377"/>
        <dbReference type="ChEBI" id="CHEBI:17544"/>
        <dbReference type="ChEBI" id="CHEBI:30616"/>
        <dbReference type="ChEBI" id="CHEBI:33019"/>
        <dbReference type="ChEBI" id="CHEBI:57926"/>
        <dbReference type="ChEBI" id="CHEBI:73682"/>
        <dbReference type="EC" id="2.7.7.87"/>
    </reaction>
</comment>
<comment type="subcellular location">
    <subcellularLocation>
        <location evidence="1">Cytoplasm</location>
    </subcellularLocation>
</comment>
<comment type="similarity">
    <text evidence="1">Belongs to the SUA5 family. TsaC subfamily.</text>
</comment>
<comment type="sequence caution" evidence="2">
    <conflict type="erroneous initiation">
        <sequence resource="EMBL-CDS" id="ABX24014"/>
    </conflict>
</comment>
<organism>
    <name type="scientific">Salmonella arizonae (strain ATCC BAA-731 / CDC346-86 / RSK2980)</name>
    <dbReference type="NCBI Taxonomy" id="41514"/>
    <lineage>
        <taxon>Bacteria</taxon>
        <taxon>Pseudomonadati</taxon>
        <taxon>Pseudomonadota</taxon>
        <taxon>Gammaproteobacteria</taxon>
        <taxon>Enterobacterales</taxon>
        <taxon>Enterobacteriaceae</taxon>
        <taxon>Salmonella</taxon>
    </lineage>
</organism>
<keyword id="KW-0067">ATP-binding</keyword>
<keyword id="KW-0963">Cytoplasm</keyword>
<keyword id="KW-0547">Nucleotide-binding</keyword>
<keyword id="KW-0548">Nucleotidyltransferase</keyword>
<keyword id="KW-1185">Reference proteome</keyword>
<keyword id="KW-0808">Transferase</keyword>
<keyword id="KW-0819">tRNA processing</keyword>